<gene>
    <name type="primary">E5</name>
</gene>
<name>VE5_PAPVR</name>
<organism>
    <name type="scientific">Reindeer papillomavirus</name>
    <name type="common">RPV</name>
    <dbReference type="NCBI Taxonomy" id="10569"/>
    <lineage>
        <taxon>Viruses</taxon>
        <taxon>Monodnaviria</taxon>
        <taxon>Shotokuvirae</taxon>
        <taxon>Cossaviricota</taxon>
        <taxon>Papovaviricetes</taxon>
        <taxon>Zurhausenvirales</taxon>
        <taxon>Papillomaviridae</taxon>
        <taxon>Firstpapillomavirinae</taxon>
        <taxon>Deltapapillomavirus</taxon>
        <taxon>Deltapapillomavirus 1</taxon>
    </lineage>
</organism>
<comment type="similarity">
    <text evidence="1">Belongs to the papillomaviridae E5 protein family.</text>
</comment>
<keyword id="KW-0244">Early protein</keyword>
<feature type="chain" id="PRO_0000133304" description="Protein E5">
    <location>
        <begin position="1"/>
        <end position="44"/>
    </location>
</feature>
<proteinExistence type="inferred from homology"/>
<protein>
    <recommendedName>
        <fullName>Protein E5</fullName>
    </recommendedName>
</protein>
<evidence type="ECO:0000305" key="1"/>
<reference key="1">
    <citation type="journal article" date="1987" name="J. Virol.">
        <title>Reindeer papillomavirus transforming properties correlate with a highly conserved E5 region.</title>
        <authorList>
            <person name="Moreno-Lopez J."/>
            <person name="Ahola H."/>
            <person name="Eriksson A."/>
            <person name="Bergman P."/>
            <person name="Pettersson U."/>
        </authorList>
    </citation>
    <scope>NUCLEOTIDE SEQUENCE [GENOMIC DNA]</scope>
</reference>
<sequence length="44" mass="5212">MNHPGLFLFLGLTFAVQLLLLVFLLFFFLVWWDQFGCRCDGFIL</sequence>
<organismHost>
    <name type="scientific">Rangifer tarandus</name>
    <name type="common">Reindeer</name>
    <name type="synonym">Cervus tarandus</name>
    <dbReference type="NCBI Taxonomy" id="9870"/>
</organismHost>
<dbReference type="EMBL" id="M18176">
    <property type="protein sequence ID" value="AAA79882.1"/>
    <property type="molecule type" value="Genomic_DNA"/>
</dbReference>
<dbReference type="PIR" id="A34088">
    <property type="entry name" value="W5WLRD"/>
</dbReference>
<dbReference type="InterPro" id="IPR012555">
    <property type="entry name" value="EPV_E5"/>
</dbReference>
<dbReference type="Pfam" id="PF08135">
    <property type="entry name" value="EPV_E5"/>
    <property type="match status" value="1"/>
</dbReference>
<dbReference type="PIRSF" id="PIRSF003401">
    <property type="entry name" value="EPV_E5"/>
    <property type="match status" value="1"/>
</dbReference>
<accession>P21403</accession>